<comment type="function">
    <text>Member of the two-component regulatory system RegB/RegA. Involved in transactivating anaerobic expression of the photosynthetic apparatus. It is a transcriptional regulator that is responsible for activating expression of the puf, puh, and puc operons in response to a decrease in oxygen tension.</text>
</comment>
<comment type="PTM">
    <text evidence="2">Phosphorylated by RegB.</text>
</comment>
<dbReference type="EMBL" id="X76559">
    <property type="protein sequence ID" value="CAA54059.2"/>
    <property type="molecule type" value="Genomic_DNA"/>
</dbReference>
<dbReference type="EMBL" id="L25895">
    <property type="protein sequence ID" value="AAA16649.1"/>
    <property type="molecule type" value="Unassigned_DNA"/>
</dbReference>
<dbReference type="EMBL" id="CP000143">
    <property type="protein sequence ID" value="ABA77661.1"/>
    <property type="molecule type" value="Genomic_DNA"/>
</dbReference>
<dbReference type="PIR" id="A36862">
    <property type="entry name" value="A36862"/>
</dbReference>
<dbReference type="PIR" id="S41451">
    <property type="entry name" value="S41451"/>
</dbReference>
<dbReference type="RefSeq" id="WP_002722225.1">
    <property type="nucleotide sequence ID" value="NZ_CP030271.1"/>
</dbReference>
<dbReference type="RefSeq" id="YP_351562.1">
    <property type="nucleotide sequence ID" value="NC_007493.2"/>
</dbReference>
<dbReference type="PDB" id="1UMQ">
    <property type="method" value="NMR"/>
    <property type="chains" value="A=125-184"/>
</dbReference>
<dbReference type="PDBsum" id="1UMQ"/>
<dbReference type="BMRB" id="Q53228"/>
<dbReference type="SMR" id="Q53228"/>
<dbReference type="IntAct" id="Q53228">
    <property type="interactions" value="2"/>
</dbReference>
<dbReference type="MINT" id="Q53228"/>
<dbReference type="STRING" id="272943.RSP_1518"/>
<dbReference type="EnsemblBacteria" id="ABA77661">
    <property type="protein sequence ID" value="ABA77661"/>
    <property type="gene ID" value="RSP_1518"/>
</dbReference>
<dbReference type="GeneID" id="67448283"/>
<dbReference type="KEGG" id="rsp:RSP_1518"/>
<dbReference type="PATRIC" id="fig|272943.9.peg.391"/>
<dbReference type="eggNOG" id="COG4567">
    <property type="taxonomic scope" value="Bacteria"/>
</dbReference>
<dbReference type="OrthoDB" id="9802426at2"/>
<dbReference type="PhylomeDB" id="Q53228"/>
<dbReference type="EvolutionaryTrace" id="Q53228"/>
<dbReference type="Proteomes" id="UP000002703">
    <property type="component" value="Chromosome 1"/>
</dbReference>
<dbReference type="GO" id="GO:0003677">
    <property type="term" value="F:DNA binding"/>
    <property type="evidence" value="ECO:0007669"/>
    <property type="project" value="UniProtKB-KW"/>
</dbReference>
<dbReference type="GO" id="GO:0000160">
    <property type="term" value="P:phosphorelay signal transduction system"/>
    <property type="evidence" value="ECO:0007669"/>
    <property type="project" value="UniProtKB-KW"/>
</dbReference>
<dbReference type="CDD" id="cd17563">
    <property type="entry name" value="REC_RegA-like"/>
    <property type="match status" value="1"/>
</dbReference>
<dbReference type="FunFam" id="1.10.10.60:FF:000036">
    <property type="entry name" value="Two-component system response regulator"/>
    <property type="match status" value="1"/>
</dbReference>
<dbReference type="FunFam" id="3.40.50.2300:FF:000205">
    <property type="entry name" value="Two-component system response regulator"/>
    <property type="match status" value="1"/>
</dbReference>
<dbReference type="Gene3D" id="3.40.50.2300">
    <property type="match status" value="1"/>
</dbReference>
<dbReference type="Gene3D" id="1.10.10.60">
    <property type="entry name" value="Homeodomain-like"/>
    <property type="match status" value="1"/>
</dbReference>
<dbReference type="InterPro" id="IPR047772">
    <property type="entry name" value="ActR_PrrA_rreg"/>
</dbReference>
<dbReference type="InterPro" id="IPR050595">
    <property type="entry name" value="Bact_response_regulator"/>
</dbReference>
<dbReference type="InterPro" id="IPR011006">
    <property type="entry name" value="CheY-like_superfamily"/>
</dbReference>
<dbReference type="InterPro" id="IPR001789">
    <property type="entry name" value="Sig_transdc_resp-reg_receiver"/>
</dbReference>
<dbReference type="NCBIfam" id="NF033791">
    <property type="entry name" value="ActR_PrrA_rreg"/>
    <property type="match status" value="1"/>
</dbReference>
<dbReference type="PANTHER" id="PTHR44591:SF14">
    <property type="entry name" value="PROTEIN PILG"/>
    <property type="match status" value="1"/>
</dbReference>
<dbReference type="PANTHER" id="PTHR44591">
    <property type="entry name" value="STRESS RESPONSE REGULATOR PROTEIN 1"/>
    <property type="match status" value="1"/>
</dbReference>
<dbReference type="Pfam" id="PF00072">
    <property type="entry name" value="Response_reg"/>
    <property type="match status" value="1"/>
</dbReference>
<dbReference type="SMART" id="SM00448">
    <property type="entry name" value="REC"/>
    <property type="match status" value="1"/>
</dbReference>
<dbReference type="SUPFAM" id="SSF52172">
    <property type="entry name" value="CheY-like"/>
    <property type="match status" value="1"/>
</dbReference>
<dbReference type="PROSITE" id="PS50110">
    <property type="entry name" value="RESPONSE_REGULATORY"/>
    <property type="match status" value="1"/>
</dbReference>
<sequence>MAEDLVFELGADRSLLLVDDDEPFLKRLAKAMEKRGFVLETAQSVAEGKAIAQARPPAYAVVDLRLEDGNGLDVVEVLRERRPDCRIVVLTGYGAIATAVAAVKIGATDYLSKPADANEVTHALLAKGESLPPPPENPMSADRVRWEHIQRIYEMCDRNVSETARRLNMHRRTLQRILAKRSPR</sequence>
<gene>
    <name type="primary">regA</name>
    <name type="synonym">prrA</name>
    <name type="ordered locus">RHOS4_00930</name>
    <name type="ORF">RSP_1518</name>
</gene>
<proteinExistence type="evidence at protein level"/>
<name>REGA_CERS4</name>
<keyword id="KW-0002">3D-structure</keyword>
<keyword id="KW-0010">Activator</keyword>
<keyword id="KW-0238">DNA-binding</keyword>
<keyword id="KW-0597">Phosphoprotein</keyword>
<keyword id="KW-1185">Reference proteome</keyword>
<keyword id="KW-0804">Transcription</keyword>
<keyword id="KW-0805">Transcription regulation</keyword>
<keyword id="KW-0902">Two-component regulatory system</keyword>
<organism>
    <name type="scientific">Cereibacter sphaeroides (strain ATCC 17023 / DSM 158 / JCM 6121 / CCUG 31486 / LMG 2827 / NBRC 12203 / NCIMB 8253 / ATH 2.4.1.)</name>
    <name type="common">Rhodobacter sphaeroides</name>
    <dbReference type="NCBI Taxonomy" id="272943"/>
    <lineage>
        <taxon>Bacteria</taxon>
        <taxon>Pseudomonadati</taxon>
        <taxon>Pseudomonadota</taxon>
        <taxon>Alphaproteobacteria</taxon>
        <taxon>Rhodobacterales</taxon>
        <taxon>Paracoccaceae</taxon>
        <taxon>Cereibacter</taxon>
    </lineage>
</organism>
<evidence type="ECO:0000255" key="1">
    <source>
        <dbReference type="PROSITE-ProRule" id="PRU00169"/>
    </source>
</evidence>
<evidence type="ECO:0000305" key="2"/>
<evidence type="ECO:0007829" key="3">
    <source>
        <dbReference type="PDB" id="1UMQ"/>
    </source>
</evidence>
<protein>
    <recommendedName>
        <fullName>Photosynthetic apparatus regulatory protein RegA</fullName>
    </recommendedName>
    <alternativeName>
        <fullName>Response regulator PrrA</fullName>
    </alternativeName>
</protein>
<reference key="1">
    <citation type="journal article" date="1994" name="FEMS Microbiol. Lett.">
        <title>Cloning and nucleotide sequence of regA, a putative response regulator gene of Rhodobacter sphaeroides.</title>
        <authorList>
            <person name="Phillips-Jones M.K."/>
            <person name="Hunter C.N."/>
        </authorList>
    </citation>
    <scope>NUCLEOTIDE SEQUENCE [GENOMIC DNA]</scope>
</reference>
<reference key="2">
    <citation type="submission" date="2000-11" db="EMBL/GenBank/DDBJ databases">
        <authorList>
            <person name="Phillips-Jones M.K."/>
        </authorList>
    </citation>
    <scope>SEQUENCE REVISION TO 98; 180-181 AND 183</scope>
</reference>
<reference key="3">
    <citation type="journal article" date="1994" name="J. Bacteriol.">
        <title>prrA, a putative response regulator involved in oxygen regulation of photosynthesis gene expression in Rhodobacter sphaeroides.</title>
        <authorList>
            <person name="Eraso J.M."/>
            <person name="Kaplan S."/>
        </authorList>
    </citation>
    <scope>NUCLEOTIDE SEQUENCE [GENOMIC DNA]</scope>
</reference>
<reference key="4">
    <citation type="submission" date="2005-09" db="EMBL/GenBank/DDBJ databases">
        <title>Complete sequence of chromosome 1 of Rhodobacter sphaeroides 2.4.1.</title>
        <authorList>
            <person name="Copeland A."/>
            <person name="Lucas S."/>
            <person name="Lapidus A."/>
            <person name="Barry K."/>
            <person name="Detter J.C."/>
            <person name="Glavina T."/>
            <person name="Hammon N."/>
            <person name="Israni S."/>
            <person name="Pitluck S."/>
            <person name="Richardson P."/>
            <person name="Mackenzie C."/>
            <person name="Choudhary M."/>
            <person name="Larimer F."/>
            <person name="Hauser L.J."/>
            <person name="Land M."/>
            <person name="Donohue T.J."/>
            <person name="Kaplan S."/>
        </authorList>
    </citation>
    <scope>NUCLEOTIDE SEQUENCE [LARGE SCALE GENOMIC DNA]</scope>
    <source>
        <strain>ATCC 17023 / DSM 158 / JCM 6121 / CCUG 31486 / LMG 2827 / NBRC 12203 / NCIMB 8253 / ATH 2.4.1.</strain>
    </source>
</reference>
<feature type="chain" id="PRO_0000081216" description="Photosynthetic apparatus regulatory protein RegA">
    <location>
        <begin position="1"/>
        <end position="184"/>
    </location>
</feature>
<feature type="domain" description="Response regulatory" evidence="1">
    <location>
        <begin position="14"/>
        <end position="128"/>
    </location>
</feature>
<feature type="strand" evidence="3">
    <location>
        <begin position="137"/>
        <end position="139"/>
    </location>
</feature>
<feature type="helix" evidence="3">
    <location>
        <begin position="141"/>
        <end position="155"/>
    </location>
</feature>
<feature type="helix" evidence="3">
    <location>
        <begin position="160"/>
        <end position="167"/>
    </location>
</feature>
<feature type="helix" evidence="3">
    <location>
        <begin position="171"/>
        <end position="179"/>
    </location>
</feature>
<accession>Q53228</accession>
<accession>Q3J6C3</accession>
<accession>Q53227</accession>